<dbReference type="EC" id="2.4.1.-" evidence="1"/>
<dbReference type="EMBL" id="CP000503">
    <property type="protein sequence ID" value="ABM24767.1"/>
    <property type="molecule type" value="Genomic_DNA"/>
</dbReference>
<dbReference type="CAZy" id="GT2">
    <property type="family name" value="Glycosyltransferase Family 2"/>
</dbReference>
<dbReference type="KEGG" id="shw:Sputw3181_1932"/>
<dbReference type="HOGENOM" id="CLU_015730_1_0_6"/>
<dbReference type="UniPathway" id="UPA00637"/>
<dbReference type="Proteomes" id="UP000002597">
    <property type="component" value="Chromosome"/>
</dbReference>
<dbReference type="GO" id="GO:0005886">
    <property type="term" value="C:plasma membrane"/>
    <property type="evidence" value="ECO:0007669"/>
    <property type="project" value="UniProtKB-SubCell"/>
</dbReference>
<dbReference type="GO" id="GO:0016758">
    <property type="term" value="F:hexosyltransferase activity"/>
    <property type="evidence" value="ECO:0007669"/>
    <property type="project" value="UniProtKB-UniRule"/>
</dbReference>
<dbReference type="GO" id="GO:0009250">
    <property type="term" value="P:glucan biosynthetic process"/>
    <property type="evidence" value="ECO:0007669"/>
    <property type="project" value="UniProtKB-UniRule"/>
</dbReference>
<dbReference type="CDD" id="cd04191">
    <property type="entry name" value="Glucan_BSP_MdoH"/>
    <property type="match status" value="1"/>
</dbReference>
<dbReference type="FunFam" id="3.90.550.10:FF:000047">
    <property type="entry name" value="Glucans biosynthesis glucosyltransferase H"/>
    <property type="match status" value="1"/>
</dbReference>
<dbReference type="Gene3D" id="3.90.550.10">
    <property type="entry name" value="Spore Coat Polysaccharide Biosynthesis Protein SpsA, Chain A"/>
    <property type="match status" value="1"/>
</dbReference>
<dbReference type="HAMAP" id="MF_01072">
    <property type="entry name" value="MdoH_OpgH"/>
    <property type="match status" value="1"/>
</dbReference>
<dbReference type="InterPro" id="IPR023725">
    <property type="entry name" value="Glucans_biosynth_gluTrFase_H"/>
</dbReference>
<dbReference type="InterPro" id="IPR001173">
    <property type="entry name" value="Glyco_trans_2-like"/>
</dbReference>
<dbReference type="InterPro" id="IPR050321">
    <property type="entry name" value="Glycosyltr_2/OpgH_subfam"/>
</dbReference>
<dbReference type="InterPro" id="IPR029044">
    <property type="entry name" value="Nucleotide-diphossugar_trans"/>
</dbReference>
<dbReference type="NCBIfam" id="NF003956">
    <property type="entry name" value="PRK05454.1-3"/>
    <property type="match status" value="1"/>
</dbReference>
<dbReference type="NCBIfam" id="NF003958">
    <property type="entry name" value="PRK05454.2-1"/>
    <property type="match status" value="1"/>
</dbReference>
<dbReference type="NCBIfam" id="NF003962">
    <property type="entry name" value="PRK05454.2-5"/>
    <property type="match status" value="1"/>
</dbReference>
<dbReference type="PANTHER" id="PTHR43867">
    <property type="entry name" value="CELLULOSE SYNTHASE CATALYTIC SUBUNIT A [UDP-FORMING]"/>
    <property type="match status" value="1"/>
</dbReference>
<dbReference type="PANTHER" id="PTHR43867:SF5">
    <property type="entry name" value="GLUCANS BIOSYNTHESIS GLUCOSYLTRANSFERASE H"/>
    <property type="match status" value="1"/>
</dbReference>
<dbReference type="Pfam" id="PF13632">
    <property type="entry name" value="Glyco_trans_2_3"/>
    <property type="match status" value="1"/>
</dbReference>
<dbReference type="SUPFAM" id="SSF53448">
    <property type="entry name" value="Nucleotide-diphospho-sugar transferases"/>
    <property type="match status" value="1"/>
</dbReference>
<sequence length="727" mass="80798">MTVSENSVLETEVLVGGSAMPNERPGAMEPQSLTEMPEGFPRRSTVANGVRSRSSRRFFVVGGALLLSSFAIYEMGAVFSIGGITPLEYLVLLLFAINFCWIALAFCSGIAGFLILLRKPKAKDLEVTELHTRTAILMPTYNESPDRVFSAVSVMAEALSQTGHGHAFDWFILSDTTDPEIALLEEQAFLVLRQETHKHSRVYYRRRRKNVARKAGNVADFCRRWGSRYDHLLVLDADSLMESSTITGLAQRMQADPDAGLIQTIPSLINGTTLMARLQQFAARIYGPVIGTGLGWWVQKEGNFWGHNAIIRTEAFMGAAGLPNLKGKPPFGGHILSHDFVEAALIRRAGWSVVIAYDLPGSYEECPPSIVDLAVRDRRWCQGNLQHSRILPTKGLHWVSRLHLLTGIMAYLSSPFWLLLILTGLMLALQAHFIRPEYFTDQFSLFPTWPIMDSDRALRLFYITMGVLFGPKIFGVLLLLKDGQFARSVGGRIKAIFSVLFEVVLSALIAPIMMFIHCGAVMSILMGRDSGWSPQRRDDGSMPWLTLIYRHRWHMLAGVMLGYAAILDSLTLLAWMSPALIGLWFAVPISAWTGSVKIGEVFKRAGILATPEERSPAAICLQAQDARAAYQAHISKPWTLAQLLKDPALMELHLAMVDKQPLRAAGTPIEPVEAIVHVKVHEAQCQESAMALFNRQEMALVLANPLMLRSLQKLPEQFVAEDLVSFC</sequence>
<organism>
    <name type="scientific">Shewanella sp. (strain W3-18-1)</name>
    <dbReference type="NCBI Taxonomy" id="351745"/>
    <lineage>
        <taxon>Bacteria</taxon>
        <taxon>Pseudomonadati</taxon>
        <taxon>Pseudomonadota</taxon>
        <taxon>Gammaproteobacteria</taxon>
        <taxon>Alteromonadales</taxon>
        <taxon>Shewanellaceae</taxon>
        <taxon>Shewanella</taxon>
    </lineage>
</organism>
<accession>A1RJC2</accession>
<feature type="chain" id="PRO_1000084504" description="Glucans biosynthesis glucosyltransferase H">
    <location>
        <begin position="1"/>
        <end position="727"/>
    </location>
</feature>
<feature type="transmembrane region" description="Helical" evidence="1">
    <location>
        <begin position="58"/>
        <end position="78"/>
    </location>
</feature>
<feature type="transmembrane region" description="Helical" evidence="1">
    <location>
        <begin position="90"/>
        <end position="110"/>
    </location>
</feature>
<feature type="transmembrane region" description="Helical" evidence="1">
    <location>
        <begin position="278"/>
        <end position="298"/>
    </location>
</feature>
<feature type="transmembrane region" description="Helical" evidence="1">
    <location>
        <begin position="408"/>
        <end position="428"/>
    </location>
</feature>
<feature type="transmembrane region" description="Helical" evidence="1">
    <location>
        <begin position="460"/>
        <end position="480"/>
    </location>
</feature>
<feature type="transmembrane region" description="Helical" evidence="1">
    <location>
        <begin position="496"/>
        <end position="516"/>
    </location>
</feature>
<feature type="transmembrane region" description="Helical" evidence="1">
    <location>
        <begin position="572"/>
        <end position="592"/>
    </location>
</feature>
<feature type="region of interest" description="Disordered" evidence="2">
    <location>
        <begin position="18"/>
        <end position="45"/>
    </location>
</feature>
<evidence type="ECO:0000255" key="1">
    <source>
        <dbReference type="HAMAP-Rule" id="MF_01072"/>
    </source>
</evidence>
<evidence type="ECO:0000256" key="2">
    <source>
        <dbReference type="SAM" id="MobiDB-lite"/>
    </source>
</evidence>
<proteinExistence type="inferred from homology"/>
<reference key="1">
    <citation type="submission" date="2006-12" db="EMBL/GenBank/DDBJ databases">
        <title>Complete sequence of Shewanella sp. W3-18-1.</title>
        <authorList>
            <consortium name="US DOE Joint Genome Institute"/>
            <person name="Copeland A."/>
            <person name="Lucas S."/>
            <person name="Lapidus A."/>
            <person name="Barry K."/>
            <person name="Detter J.C."/>
            <person name="Glavina del Rio T."/>
            <person name="Hammon N."/>
            <person name="Israni S."/>
            <person name="Dalin E."/>
            <person name="Tice H."/>
            <person name="Pitluck S."/>
            <person name="Chain P."/>
            <person name="Malfatti S."/>
            <person name="Shin M."/>
            <person name="Vergez L."/>
            <person name="Schmutz J."/>
            <person name="Larimer F."/>
            <person name="Land M."/>
            <person name="Hauser L."/>
            <person name="Kyrpides N."/>
            <person name="Lykidis A."/>
            <person name="Tiedje J."/>
            <person name="Richardson P."/>
        </authorList>
    </citation>
    <scope>NUCLEOTIDE SEQUENCE [LARGE SCALE GENOMIC DNA]</scope>
    <source>
        <strain>W3-18-1</strain>
    </source>
</reference>
<comment type="function">
    <text evidence="1">Involved in the biosynthesis of osmoregulated periplasmic glucans (OPGs).</text>
</comment>
<comment type="pathway">
    <text evidence="1">Glycan metabolism; osmoregulated periplasmic glucan (OPG) biosynthesis.</text>
</comment>
<comment type="subcellular location">
    <subcellularLocation>
        <location evidence="1">Cell inner membrane</location>
        <topology evidence="1">Multi-pass membrane protein</topology>
    </subcellularLocation>
</comment>
<comment type="similarity">
    <text evidence="1">Belongs to the glycosyltransferase 2 family. OpgH subfamily.</text>
</comment>
<name>OPGH_SHESW</name>
<gene>
    <name evidence="1" type="primary">opgH</name>
    <name type="ordered locus">Sputw3181_1932</name>
</gene>
<keyword id="KW-0997">Cell inner membrane</keyword>
<keyword id="KW-1003">Cell membrane</keyword>
<keyword id="KW-0328">Glycosyltransferase</keyword>
<keyword id="KW-0472">Membrane</keyword>
<keyword id="KW-0808">Transferase</keyword>
<keyword id="KW-0812">Transmembrane</keyword>
<keyword id="KW-1133">Transmembrane helix</keyword>
<protein>
    <recommendedName>
        <fullName evidence="1">Glucans biosynthesis glucosyltransferase H</fullName>
        <ecNumber evidence="1">2.4.1.-</ecNumber>
    </recommendedName>
</protein>